<proteinExistence type="inferred from homology"/>
<evidence type="ECO:0000255" key="1">
    <source>
        <dbReference type="HAMAP-Rule" id="MF_01554"/>
    </source>
</evidence>
<evidence type="ECO:0000305" key="2"/>
<organism>
    <name type="scientific">Brucella canis (strain ATCC 23365 / NCTC 10854 / RM-666)</name>
    <dbReference type="NCBI Taxonomy" id="483179"/>
    <lineage>
        <taxon>Bacteria</taxon>
        <taxon>Pseudomonadati</taxon>
        <taxon>Pseudomonadota</taxon>
        <taxon>Alphaproteobacteria</taxon>
        <taxon>Hyphomicrobiales</taxon>
        <taxon>Brucellaceae</taxon>
        <taxon>Brucella/Ochrobactrum group</taxon>
        <taxon>Brucella</taxon>
    </lineage>
</organism>
<comment type="function">
    <text evidence="1">Catalyzes the conversion of glucosamine-6-phosphate to glucosamine-1-phosphate.</text>
</comment>
<comment type="catalytic activity">
    <reaction evidence="1">
        <text>alpha-D-glucosamine 1-phosphate = D-glucosamine 6-phosphate</text>
        <dbReference type="Rhea" id="RHEA:23424"/>
        <dbReference type="ChEBI" id="CHEBI:58516"/>
        <dbReference type="ChEBI" id="CHEBI:58725"/>
        <dbReference type="EC" id="5.4.2.10"/>
    </reaction>
</comment>
<comment type="cofactor">
    <cofactor evidence="1">
        <name>Mg(2+)</name>
        <dbReference type="ChEBI" id="CHEBI:18420"/>
    </cofactor>
    <text evidence="1">Binds 1 Mg(2+) ion per subunit.</text>
</comment>
<comment type="PTM">
    <text evidence="1">Activated by phosphorylation.</text>
</comment>
<comment type="similarity">
    <text evidence="1">Belongs to the phosphohexose mutase family.</text>
</comment>
<comment type="sequence caution" evidence="2">
    <conflict type="erroneous initiation">
        <sequence resource="EMBL-CDS" id="ABX62736"/>
    </conflict>
</comment>
<accession>A9M7I9</accession>
<feature type="chain" id="PRO_0000343585" description="Phosphoglucosamine mutase">
    <location>
        <begin position="1"/>
        <end position="451"/>
    </location>
</feature>
<feature type="active site" description="Phosphoserine intermediate" evidence="1">
    <location>
        <position position="102"/>
    </location>
</feature>
<feature type="binding site" description="via phosphate group" evidence="1">
    <location>
        <position position="102"/>
    </location>
    <ligand>
        <name>Mg(2+)</name>
        <dbReference type="ChEBI" id="CHEBI:18420"/>
    </ligand>
</feature>
<feature type="binding site" evidence="1">
    <location>
        <position position="243"/>
    </location>
    <ligand>
        <name>Mg(2+)</name>
        <dbReference type="ChEBI" id="CHEBI:18420"/>
    </ligand>
</feature>
<feature type="binding site" evidence="1">
    <location>
        <position position="245"/>
    </location>
    <ligand>
        <name>Mg(2+)</name>
        <dbReference type="ChEBI" id="CHEBI:18420"/>
    </ligand>
</feature>
<feature type="binding site" evidence="1">
    <location>
        <position position="247"/>
    </location>
    <ligand>
        <name>Mg(2+)</name>
        <dbReference type="ChEBI" id="CHEBI:18420"/>
    </ligand>
</feature>
<feature type="modified residue" description="Phosphoserine" evidence="1">
    <location>
        <position position="102"/>
    </location>
</feature>
<keyword id="KW-0413">Isomerase</keyword>
<keyword id="KW-0460">Magnesium</keyword>
<keyword id="KW-0479">Metal-binding</keyword>
<keyword id="KW-0597">Phosphoprotein</keyword>
<keyword id="KW-1185">Reference proteome</keyword>
<name>GLMM_BRUC2</name>
<reference key="1">
    <citation type="submission" date="2007-10" db="EMBL/GenBank/DDBJ databases">
        <title>Brucella canis ATCC 23365 whole genome shotgun sequencing project.</title>
        <authorList>
            <person name="Setubal J.C."/>
            <person name="Bowns C."/>
            <person name="Boyle S."/>
            <person name="Crasta O.R."/>
            <person name="Czar M.J."/>
            <person name="Dharmanolla C."/>
            <person name="Gillespie J.J."/>
            <person name="Kenyon R.W."/>
            <person name="Lu J."/>
            <person name="Mane S."/>
            <person name="Mohapatra S."/>
            <person name="Nagrani S."/>
            <person name="Purkayastha A."/>
            <person name="Rajasimha H.K."/>
            <person name="Shallom J.M."/>
            <person name="Shallom S."/>
            <person name="Shukla M."/>
            <person name="Snyder E.E."/>
            <person name="Sobral B.W."/>
            <person name="Wattam A.R."/>
            <person name="Will R."/>
            <person name="Williams K."/>
            <person name="Yoo H."/>
            <person name="Bruce D."/>
            <person name="Detter C."/>
            <person name="Munk C."/>
            <person name="Brettin T.S."/>
        </authorList>
    </citation>
    <scope>NUCLEOTIDE SEQUENCE [LARGE SCALE GENOMIC DNA]</scope>
    <source>
        <strain>ATCC 23365 / NCTC 10854 / RM-666</strain>
    </source>
</reference>
<dbReference type="EC" id="5.4.2.10" evidence="1"/>
<dbReference type="EMBL" id="CP000872">
    <property type="protein sequence ID" value="ABX62736.1"/>
    <property type="status" value="ALT_INIT"/>
    <property type="molecule type" value="Genomic_DNA"/>
</dbReference>
<dbReference type="SMR" id="A9M7I9"/>
<dbReference type="KEGG" id="bcs:BCAN_A1730"/>
<dbReference type="HOGENOM" id="CLU_016950_7_0_5"/>
<dbReference type="PhylomeDB" id="A9M7I9"/>
<dbReference type="Proteomes" id="UP000001385">
    <property type="component" value="Chromosome I"/>
</dbReference>
<dbReference type="GO" id="GO:0005829">
    <property type="term" value="C:cytosol"/>
    <property type="evidence" value="ECO:0007669"/>
    <property type="project" value="TreeGrafter"/>
</dbReference>
<dbReference type="GO" id="GO:0000287">
    <property type="term" value="F:magnesium ion binding"/>
    <property type="evidence" value="ECO:0007669"/>
    <property type="project" value="UniProtKB-UniRule"/>
</dbReference>
<dbReference type="GO" id="GO:0008966">
    <property type="term" value="F:phosphoglucosamine mutase activity"/>
    <property type="evidence" value="ECO:0007669"/>
    <property type="project" value="UniProtKB-UniRule"/>
</dbReference>
<dbReference type="GO" id="GO:0004615">
    <property type="term" value="F:phosphomannomutase activity"/>
    <property type="evidence" value="ECO:0007669"/>
    <property type="project" value="TreeGrafter"/>
</dbReference>
<dbReference type="GO" id="GO:0005975">
    <property type="term" value="P:carbohydrate metabolic process"/>
    <property type="evidence" value="ECO:0007669"/>
    <property type="project" value="InterPro"/>
</dbReference>
<dbReference type="GO" id="GO:0009252">
    <property type="term" value="P:peptidoglycan biosynthetic process"/>
    <property type="evidence" value="ECO:0007669"/>
    <property type="project" value="TreeGrafter"/>
</dbReference>
<dbReference type="GO" id="GO:0006048">
    <property type="term" value="P:UDP-N-acetylglucosamine biosynthetic process"/>
    <property type="evidence" value="ECO:0007669"/>
    <property type="project" value="TreeGrafter"/>
</dbReference>
<dbReference type="CDD" id="cd05802">
    <property type="entry name" value="GlmM"/>
    <property type="match status" value="1"/>
</dbReference>
<dbReference type="FunFam" id="3.30.310.50:FF:000001">
    <property type="entry name" value="Phosphoglucosamine mutase"/>
    <property type="match status" value="1"/>
</dbReference>
<dbReference type="FunFam" id="3.40.120.10:FF:000001">
    <property type="entry name" value="Phosphoglucosamine mutase"/>
    <property type="match status" value="1"/>
</dbReference>
<dbReference type="FunFam" id="3.40.120.10:FF:000003">
    <property type="entry name" value="Phosphoglucosamine mutase"/>
    <property type="match status" value="1"/>
</dbReference>
<dbReference type="Gene3D" id="3.40.120.10">
    <property type="entry name" value="Alpha-D-Glucose-1,6-Bisphosphate, subunit A, domain 3"/>
    <property type="match status" value="3"/>
</dbReference>
<dbReference type="Gene3D" id="3.30.310.50">
    <property type="entry name" value="Alpha-D-phosphohexomutase, C-terminal domain"/>
    <property type="match status" value="1"/>
</dbReference>
<dbReference type="HAMAP" id="MF_01554_B">
    <property type="entry name" value="GlmM_B"/>
    <property type="match status" value="1"/>
</dbReference>
<dbReference type="InterPro" id="IPR005844">
    <property type="entry name" value="A-D-PHexomutase_a/b/a-I"/>
</dbReference>
<dbReference type="InterPro" id="IPR016055">
    <property type="entry name" value="A-D-PHexomutase_a/b/a-I/II/III"/>
</dbReference>
<dbReference type="InterPro" id="IPR005845">
    <property type="entry name" value="A-D-PHexomutase_a/b/a-II"/>
</dbReference>
<dbReference type="InterPro" id="IPR005846">
    <property type="entry name" value="A-D-PHexomutase_a/b/a-III"/>
</dbReference>
<dbReference type="InterPro" id="IPR005843">
    <property type="entry name" value="A-D-PHexomutase_C"/>
</dbReference>
<dbReference type="InterPro" id="IPR036900">
    <property type="entry name" value="A-D-PHexomutase_C_sf"/>
</dbReference>
<dbReference type="InterPro" id="IPR016066">
    <property type="entry name" value="A-D-PHexomutase_CS"/>
</dbReference>
<dbReference type="InterPro" id="IPR005841">
    <property type="entry name" value="Alpha-D-phosphohexomutase_SF"/>
</dbReference>
<dbReference type="InterPro" id="IPR006352">
    <property type="entry name" value="GlmM_bact"/>
</dbReference>
<dbReference type="InterPro" id="IPR050060">
    <property type="entry name" value="Phosphoglucosamine_mutase"/>
</dbReference>
<dbReference type="NCBIfam" id="TIGR01455">
    <property type="entry name" value="glmM"/>
    <property type="match status" value="1"/>
</dbReference>
<dbReference type="NCBIfam" id="NF008139">
    <property type="entry name" value="PRK10887.1"/>
    <property type="match status" value="1"/>
</dbReference>
<dbReference type="PANTHER" id="PTHR42946:SF1">
    <property type="entry name" value="PHOSPHOGLUCOMUTASE (ALPHA-D-GLUCOSE-1,6-BISPHOSPHATE-DEPENDENT)"/>
    <property type="match status" value="1"/>
</dbReference>
<dbReference type="PANTHER" id="PTHR42946">
    <property type="entry name" value="PHOSPHOHEXOSE MUTASE"/>
    <property type="match status" value="1"/>
</dbReference>
<dbReference type="Pfam" id="PF02878">
    <property type="entry name" value="PGM_PMM_I"/>
    <property type="match status" value="1"/>
</dbReference>
<dbReference type="Pfam" id="PF02879">
    <property type="entry name" value="PGM_PMM_II"/>
    <property type="match status" value="1"/>
</dbReference>
<dbReference type="Pfam" id="PF02880">
    <property type="entry name" value="PGM_PMM_III"/>
    <property type="match status" value="1"/>
</dbReference>
<dbReference type="Pfam" id="PF00408">
    <property type="entry name" value="PGM_PMM_IV"/>
    <property type="match status" value="1"/>
</dbReference>
<dbReference type="PRINTS" id="PR00509">
    <property type="entry name" value="PGMPMM"/>
</dbReference>
<dbReference type="SUPFAM" id="SSF55957">
    <property type="entry name" value="Phosphoglucomutase, C-terminal domain"/>
    <property type="match status" value="1"/>
</dbReference>
<dbReference type="SUPFAM" id="SSF53738">
    <property type="entry name" value="Phosphoglucomutase, first 3 domains"/>
    <property type="match status" value="3"/>
</dbReference>
<dbReference type="PROSITE" id="PS00710">
    <property type="entry name" value="PGM_PMM"/>
    <property type="match status" value="1"/>
</dbReference>
<protein>
    <recommendedName>
        <fullName evidence="1">Phosphoglucosamine mutase</fullName>
        <ecNumber evidence="1">5.4.2.10</ecNumber>
    </recommendedName>
</protein>
<sequence>MTRKFFGTDGIRGQANSFPMTPEIAMKVGMAVGYIFRRKGQASRVVIGKDTRRSGYMLENALVAGFTAAGMDVFLLGPIPTPAVAMLCRSLRADIGVMISASHNPFYDNGIKLFGPDGFKLSDQIELQIEAMIEGDMTPFLASHGDVGRAKRVDGDIYRYIEFAKRTLPRNISLNGLRVVVDCANGAGYKVAPAALWELGAEVITINNEPNGININEDCGSTHPIGLMKKVHEVRADVGIALDGDADRVLLVDENGTVIDGDQLMAVIAESWAASNRLEGGGIVATVMSNLGLERFLADRNLTLARTKVGDRYVVEHMREHGFNVGGEQSGHIVLSDFATTGDGLISALQILAVAQEQNKPISDVCRKFQPVPQLLKNVRTTGGKPLENKRVKSAIDEAKERLGGQGRLVIRPSGTEPLIRVMAEGDDRGLVEKVVNDIIDVISSESSAAA</sequence>
<gene>
    <name evidence="1" type="primary">glmM</name>
    <name type="ordered locus">BCAN_A1730</name>
</gene>